<dbReference type="EC" id="3.1.26.5" evidence="1"/>
<dbReference type="EMBL" id="CP000492">
    <property type="protein sequence ID" value="ABL66726.1"/>
    <property type="molecule type" value="Genomic_DNA"/>
</dbReference>
<dbReference type="RefSeq" id="WP_015961253.1">
    <property type="nucleotide sequence ID" value="NC_008639.1"/>
</dbReference>
<dbReference type="SMR" id="A1BJZ9"/>
<dbReference type="STRING" id="290317.Cpha266_2742"/>
<dbReference type="KEGG" id="cph:Cpha266_2742"/>
<dbReference type="eggNOG" id="COG0594">
    <property type="taxonomic scope" value="Bacteria"/>
</dbReference>
<dbReference type="HOGENOM" id="CLU_117179_1_1_10"/>
<dbReference type="Proteomes" id="UP000008701">
    <property type="component" value="Chromosome"/>
</dbReference>
<dbReference type="GO" id="GO:0004526">
    <property type="term" value="F:ribonuclease P activity"/>
    <property type="evidence" value="ECO:0007669"/>
    <property type="project" value="UniProtKB-UniRule"/>
</dbReference>
<dbReference type="GO" id="GO:0000049">
    <property type="term" value="F:tRNA binding"/>
    <property type="evidence" value="ECO:0007669"/>
    <property type="project" value="UniProtKB-UniRule"/>
</dbReference>
<dbReference type="GO" id="GO:0001682">
    <property type="term" value="P:tRNA 5'-leader removal"/>
    <property type="evidence" value="ECO:0007669"/>
    <property type="project" value="UniProtKB-UniRule"/>
</dbReference>
<dbReference type="Gene3D" id="3.30.230.10">
    <property type="match status" value="1"/>
</dbReference>
<dbReference type="HAMAP" id="MF_00227">
    <property type="entry name" value="RNase_P"/>
    <property type="match status" value="1"/>
</dbReference>
<dbReference type="InterPro" id="IPR020568">
    <property type="entry name" value="Ribosomal_Su5_D2-typ_SF"/>
</dbReference>
<dbReference type="InterPro" id="IPR014721">
    <property type="entry name" value="Ribsml_uS5_D2-typ_fold_subgr"/>
</dbReference>
<dbReference type="InterPro" id="IPR000100">
    <property type="entry name" value="RNase_P"/>
</dbReference>
<dbReference type="InterPro" id="IPR020539">
    <property type="entry name" value="RNase_P_CS"/>
</dbReference>
<dbReference type="NCBIfam" id="NF002512">
    <property type="entry name" value="PRK01903.2-3"/>
    <property type="match status" value="1"/>
</dbReference>
<dbReference type="Pfam" id="PF00825">
    <property type="entry name" value="Ribonuclease_P"/>
    <property type="match status" value="1"/>
</dbReference>
<dbReference type="SUPFAM" id="SSF54211">
    <property type="entry name" value="Ribosomal protein S5 domain 2-like"/>
    <property type="match status" value="1"/>
</dbReference>
<dbReference type="PROSITE" id="PS00648">
    <property type="entry name" value="RIBONUCLEASE_P"/>
    <property type="match status" value="1"/>
</dbReference>
<protein>
    <recommendedName>
        <fullName evidence="1">Ribonuclease P protein component</fullName>
        <shortName evidence="1">RNase P protein</shortName>
        <shortName evidence="1">RNaseP protein</shortName>
        <ecNumber evidence="1">3.1.26.5</ecNumber>
    </recommendedName>
    <alternativeName>
        <fullName evidence="1">Protein C5</fullName>
    </alternativeName>
</protein>
<proteinExistence type="inferred from homology"/>
<reference key="1">
    <citation type="submission" date="2006-12" db="EMBL/GenBank/DDBJ databases">
        <title>Complete sequence of Chlorobium phaeobacteroides DSM 266.</title>
        <authorList>
            <consortium name="US DOE Joint Genome Institute"/>
            <person name="Copeland A."/>
            <person name="Lucas S."/>
            <person name="Lapidus A."/>
            <person name="Barry K."/>
            <person name="Detter J.C."/>
            <person name="Glavina del Rio T."/>
            <person name="Hammon N."/>
            <person name="Israni S."/>
            <person name="Pitluck S."/>
            <person name="Goltsman E."/>
            <person name="Schmutz J."/>
            <person name="Larimer F."/>
            <person name="Land M."/>
            <person name="Hauser L."/>
            <person name="Mikhailova N."/>
            <person name="Li T."/>
            <person name="Overmann J."/>
            <person name="Bryant D.A."/>
            <person name="Richardson P."/>
        </authorList>
    </citation>
    <scope>NUCLEOTIDE SEQUENCE [LARGE SCALE GENOMIC DNA]</scope>
    <source>
        <strain>DSM 266 / SMG 266 / 2430</strain>
    </source>
</reference>
<name>RNPA_CHLPD</name>
<keyword id="KW-0255">Endonuclease</keyword>
<keyword id="KW-0378">Hydrolase</keyword>
<keyword id="KW-0540">Nuclease</keyword>
<keyword id="KW-1185">Reference proteome</keyword>
<keyword id="KW-0694">RNA-binding</keyword>
<keyword id="KW-0819">tRNA processing</keyword>
<organism>
    <name type="scientific">Chlorobium phaeobacteroides (strain DSM 266 / SMG 266 / 2430)</name>
    <dbReference type="NCBI Taxonomy" id="290317"/>
    <lineage>
        <taxon>Bacteria</taxon>
        <taxon>Pseudomonadati</taxon>
        <taxon>Chlorobiota</taxon>
        <taxon>Chlorobiia</taxon>
        <taxon>Chlorobiales</taxon>
        <taxon>Chlorobiaceae</taxon>
        <taxon>Chlorobium/Pelodictyon group</taxon>
        <taxon>Chlorobium</taxon>
    </lineage>
</organism>
<comment type="function">
    <text evidence="1">RNaseP catalyzes the removal of the 5'-leader sequence from pre-tRNA to produce the mature 5'-terminus. It can also cleave other RNA substrates such as 4.5S RNA. The protein component plays an auxiliary but essential role in vivo by binding to the 5'-leader sequence and broadening the substrate specificity of the ribozyme.</text>
</comment>
<comment type="catalytic activity">
    <reaction evidence="1">
        <text>Endonucleolytic cleavage of RNA, removing 5'-extranucleotides from tRNA precursor.</text>
        <dbReference type="EC" id="3.1.26.5"/>
    </reaction>
</comment>
<comment type="subunit">
    <text evidence="1">Consists of a catalytic RNA component (M1 or rnpB) and a protein subunit.</text>
</comment>
<comment type="similarity">
    <text evidence="1">Belongs to the RnpA family.</text>
</comment>
<gene>
    <name evidence="1" type="primary">rnpA</name>
    <name type="ordered locus">Cpha266_2742</name>
</gene>
<accession>A1BJZ9</accession>
<evidence type="ECO:0000255" key="1">
    <source>
        <dbReference type="HAMAP-Rule" id="MF_00227"/>
    </source>
</evidence>
<feature type="chain" id="PRO_1000194620" description="Ribonuclease P protein component">
    <location>
        <begin position="1"/>
        <end position="146"/>
    </location>
</feature>
<sequence length="146" mass="16903">MHHEVMSGLHVNSLRKHEILRKEQLIAALFVSGKSCKGEYLKLFYQKTVSDVKSRSPAVQVLFAVSKKNVPHAVSRNRLKRLMREAYRNEKQQLFTLCDEGRPEMSGIHLQIAVLYIGGRKSFPSFELLRQEISRLMHNIRLSELT</sequence>